<reference key="1">
    <citation type="journal article" date="2005" name="PLoS Biol.">
        <title>The genomes of Oryza sativa: a history of duplications.</title>
        <authorList>
            <person name="Yu J."/>
            <person name="Wang J."/>
            <person name="Lin W."/>
            <person name="Li S."/>
            <person name="Li H."/>
            <person name="Zhou J."/>
            <person name="Ni P."/>
            <person name="Dong W."/>
            <person name="Hu S."/>
            <person name="Zeng C."/>
            <person name="Zhang J."/>
            <person name="Zhang Y."/>
            <person name="Li R."/>
            <person name="Xu Z."/>
            <person name="Li S."/>
            <person name="Li X."/>
            <person name="Zheng H."/>
            <person name="Cong L."/>
            <person name="Lin L."/>
            <person name="Yin J."/>
            <person name="Geng J."/>
            <person name="Li G."/>
            <person name="Shi J."/>
            <person name="Liu J."/>
            <person name="Lv H."/>
            <person name="Li J."/>
            <person name="Wang J."/>
            <person name="Deng Y."/>
            <person name="Ran L."/>
            <person name="Shi X."/>
            <person name="Wang X."/>
            <person name="Wu Q."/>
            <person name="Li C."/>
            <person name="Ren X."/>
            <person name="Wang J."/>
            <person name="Wang X."/>
            <person name="Li D."/>
            <person name="Liu D."/>
            <person name="Zhang X."/>
            <person name="Ji Z."/>
            <person name="Zhao W."/>
            <person name="Sun Y."/>
            <person name="Zhang Z."/>
            <person name="Bao J."/>
            <person name="Han Y."/>
            <person name="Dong L."/>
            <person name="Ji J."/>
            <person name="Chen P."/>
            <person name="Wu S."/>
            <person name="Liu J."/>
            <person name="Xiao Y."/>
            <person name="Bu D."/>
            <person name="Tan J."/>
            <person name="Yang L."/>
            <person name="Ye C."/>
            <person name="Zhang J."/>
            <person name="Xu J."/>
            <person name="Zhou Y."/>
            <person name="Yu Y."/>
            <person name="Zhang B."/>
            <person name="Zhuang S."/>
            <person name="Wei H."/>
            <person name="Liu B."/>
            <person name="Lei M."/>
            <person name="Yu H."/>
            <person name="Li Y."/>
            <person name="Xu H."/>
            <person name="Wei S."/>
            <person name="He X."/>
            <person name="Fang L."/>
            <person name="Zhang Z."/>
            <person name="Zhang Y."/>
            <person name="Huang X."/>
            <person name="Su Z."/>
            <person name="Tong W."/>
            <person name="Li J."/>
            <person name="Tong Z."/>
            <person name="Li S."/>
            <person name="Ye J."/>
            <person name="Wang L."/>
            <person name="Fang L."/>
            <person name="Lei T."/>
            <person name="Chen C.-S."/>
            <person name="Chen H.-C."/>
            <person name="Xu Z."/>
            <person name="Li H."/>
            <person name="Huang H."/>
            <person name="Zhang F."/>
            <person name="Xu H."/>
            <person name="Li N."/>
            <person name="Zhao C."/>
            <person name="Li S."/>
            <person name="Dong L."/>
            <person name="Huang Y."/>
            <person name="Li L."/>
            <person name="Xi Y."/>
            <person name="Qi Q."/>
            <person name="Li W."/>
            <person name="Zhang B."/>
            <person name="Hu W."/>
            <person name="Zhang Y."/>
            <person name="Tian X."/>
            <person name="Jiao Y."/>
            <person name="Liang X."/>
            <person name="Jin J."/>
            <person name="Gao L."/>
            <person name="Zheng W."/>
            <person name="Hao B."/>
            <person name="Liu S.-M."/>
            <person name="Wang W."/>
            <person name="Yuan L."/>
            <person name="Cao M."/>
            <person name="McDermott J."/>
            <person name="Samudrala R."/>
            <person name="Wang J."/>
            <person name="Wong G.K.-S."/>
            <person name="Yang H."/>
        </authorList>
    </citation>
    <scope>NUCLEOTIDE SEQUENCE [LARGE SCALE GENOMIC DNA]</scope>
    <source>
        <strain>cv. 93-11</strain>
    </source>
</reference>
<gene>
    <name evidence="5" type="primary">COI2</name>
    <name evidence="6" type="ORF">OsI_10865</name>
</gene>
<accession>A2XEV1</accession>
<organism>
    <name type="scientific">Oryza sativa subsp. indica</name>
    <name type="common">Rice</name>
    <dbReference type="NCBI Taxonomy" id="39946"/>
    <lineage>
        <taxon>Eukaryota</taxon>
        <taxon>Viridiplantae</taxon>
        <taxon>Streptophyta</taxon>
        <taxon>Embryophyta</taxon>
        <taxon>Tracheophyta</taxon>
        <taxon>Spermatophyta</taxon>
        <taxon>Magnoliopsida</taxon>
        <taxon>Liliopsida</taxon>
        <taxon>Poales</taxon>
        <taxon>Poaceae</taxon>
        <taxon>BOP clade</taxon>
        <taxon>Oryzoideae</taxon>
        <taxon>Oryzeae</taxon>
        <taxon>Oryzinae</taxon>
        <taxon>Oryza</taxon>
        <taxon>Oryza sativa</taxon>
    </lineage>
</organism>
<keyword id="KW-1185">Reference proteome</keyword>
<proteinExistence type="inferred from homology"/>
<evidence type="ECO:0000250" key="1">
    <source>
        <dbReference type="UniProtKB" id="O04197"/>
    </source>
</evidence>
<evidence type="ECO:0000250" key="2">
    <source>
        <dbReference type="UniProtKB" id="Q60EH4"/>
    </source>
</evidence>
<evidence type="ECO:0000250" key="3">
    <source>
        <dbReference type="UniProtKB" id="Q84QA7"/>
    </source>
</evidence>
<evidence type="ECO:0000255" key="4"/>
<evidence type="ECO:0000305" key="5"/>
<evidence type="ECO:0000312" key="6">
    <source>
        <dbReference type="EMBL" id="EAY89361.1"/>
    </source>
</evidence>
<feature type="chain" id="PRO_0000434870" description="Coronatine-insensitive protein homolog 2">
    <location>
        <begin position="1"/>
        <end position="589"/>
    </location>
</feature>
<feature type="domain" description="F-box" evidence="4">
    <location>
        <begin position="18"/>
        <end position="59"/>
    </location>
</feature>
<feature type="binding site" evidence="1">
    <location>
        <position position="87"/>
    </location>
    <ligand>
        <name>jasmonate</name>
        <dbReference type="ChEBI" id="CHEBI:58431"/>
    </ligand>
</feature>
<feature type="binding site" evidence="1">
    <location>
        <position position="352"/>
    </location>
    <ligand>
        <name>jasmonate</name>
        <dbReference type="ChEBI" id="CHEBI:58431"/>
    </ligand>
</feature>
<feature type="binding site" evidence="1">
    <location>
        <position position="414"/>
    </location>
    <ligand>
        <name>jasmonate</name>
        <dbReference type="ChEBI" id="CHEBI:58431"/>
    </ligand>
</feature>
<feature type="binding site" evidence="1">
    <location>
        <position position="501"/>
    </location>
    <ligand>
        <name>jasmonate</name>
        <dbReference type="ChEBI" id="CHEBI:58431"/>
    </ligand>
</feature>
<sequence>MGGEAGERRLGRAMSFGIPDVALGLVMGFVEDPWDRDAISLVCRHWCRVDALSRKHVTVAMAYSTTPDRLFRRFPCLESLKLKAKPRAAMFNLIPEDWGGSASPWIRQLSASFHFLKALHLRRMIVSDDDLDVLVRAKAHMLSSFKLDRCSGFSTSSLALVARTCKKLETLFLEDSIIAEKENDEWIRELATNNSVLETLNFFLTDLRASPAYLTLLVRNCRRLKVLKISECFMLDLVDLFRTAEILQDFAGGSFDDQGQVEESRNYENYYFPPSLLRLSLLYMGTKEMQVLFPYGAALKKLDLQFTFLSTEDHCQLVQRCPNLEILEVRDVIGDRGLEVVAQTCKKLQRLRVERGDDDQGGLEDEHGMVTQVGLMAVAQGCPHLEYWAVHVTDITNAALEAIGTYSSSLNDFRLVLLDREANITESPLDNGVRALLRGCTKLRRFAFYVRPGALSDVGLGYIGEFSKTIRYMLLGNVGESDQGLLQLSTGCPSLQKLELRGCFFSERALAVAVLQLKSLRYLWVQGYKASPNGTDLMAMVRPFWNIEIIAPNQDEVCPDGQAQILAYYSLAGMRSDYPHSVIPLYPSV</sequence>
<comment type="function">
    <text evidence="1 2">Involved in jasmonate (JA) signaling. Required for jasmonate signaling in plant defense responses (By similarity). Component of SCF(COI1) E3 ubiquitin ligase complexes, which may mediate the ubiquitination and subsequent proteasomal degradation of target proteins, including TIFY/JAZ family (By similarity).</text>
</comment>
<comment type="subunit">
    <text evidence="3">Interacts with TIFY9/JAZ5, TIFY11C/JAZ11 and TIFY11D/JAZ12 in a coronatine-dependent manner.</text>
</comment>
<name>COI2_ORYSI</name>
<dbReference type="EMBL" id="CM000128">
    <property type="protein sequence ID" value="EAY89361.1"/>
    <property type="molecule type" value="Genomic_DNA"/>
</dbReference>
<dbReference type="SMR" id="A2XEV1"/>
<dbReference type="STRING" id="39946.A2XEV1"/>
<dbReference type="EnsemblPlants" id="BGIOSGA012284-TA">
    <property type="protein sequence ID" value="BGIOSGA012284-PA"/>
    <property type="gene ID" value="BGIOSGA012284"/>
</dbReference>
<dbReference type="EnsemblPlants" id="OsIR64_03g0011600.01">
    <property type="protein sequence ID" value="OsIR64_03g0011600.01"/>
    <property type="gene ID" value="OsIR64_03g0011600"/>
</dbReference>
<dbReference type="EnsemblPlants" id="OsIR64_03g0011600.02">
    <property type="protein sequence ID" value="OsIR64_03g0011600.02"/>
    <property type="gene ID" value="OsIR64_03g0011600"/>
</dbReference>
<dbReference type="EnsemblPlants" id="OsIR64_03g0011600.03">
    <property type="protein sequence ID" value="OsIR64_03g0011600.03"/>
    <property type="gene ID" value="OsIR64_03g0011600"/>
</dbReference>
<dbReference type="EnsemblPlants" id="OsIR64_03g0011600.04">
    <property type="protein sequence ID" value="OsIR64_03g0011600.04"/>
    <property type="gene ID" value="OsIR64_03g0011600"/>
</dbReference>
<dbReference type="EnsemblPlants" id="OsIR64_03g0011600.05">
    <property type="protein sequence ID" value="OsIR64_03g0011600.05"/>
    <property type="gene ID" value="OsIR64_03g0011600"/>
</dbReference>
<dbReference type="EnsemblPlants" id="OsKYG_03g0011830.01">
    <property type="protein sequence ID" value="OsKYG_03g0011830.01"/>
    <property type="gene ID" value="OsKYG_03g0011830"/>
</dbReference>
<dbReference type="EnsemblPlants" id="OsKYG_03g0011830.02">
    <property type="protein sequence ID" value="OsKYG_03g0011830.02"/>
    <property type="gene ID" value="OsKYG_03g0011830"/>
</dbReference>
<dbReference type="EnsemblPlants" id="OsKYG_03g0011830.03">
    <property type="protein sequence ID" value="OsKYG_03g0011830.03"/>
    <property type="gene ID" value="OsKYG_03g0011830"/>
</dbReference>
<dbReference type="EnsemblPlants" id="OsKYG_03g0011830.04">
    <property type="protein sequence ID" value="OsKYG_03g0011830.04"/>
    <property type="gene ID" value="OsKYG_03g0011830"/>
</dbReference>
<dbReference type="EnsemblPlants" id="OsLaMu_03g0011710.01">
    <property type="protein sequence ID" value="OsLaMu_03g0011710.01"/>
    <property type="gene ID" value="OsLaMu_03g0011710"/>
</dbReference>
<dbReference type="EnsemblPlants" id="OsLaMu_03g0011710.02">
    <property type="protein sequence ID" value="OsLaMu_03g0011710.02"/>
    <property type="gene ID" value="OsLaMu_03g0011710"/>
</dbReference>
<dbReference type="EnsemblPlants" id="OsLaMu_03g0011710.03">
    <property type="protein sequence ID" value="OsLaMu_03g0011710.03"/>
    <property type="gene ID" value="OsLaMu_03g0011710"/>
</dbReference>
<dbReference type="EnsemblPlants" id="OsLaMu_03g0011710.04">
    <property type="protein sequence ID" value="OsLaMu_03g0011710.04"/>
    <property type="gene ID" value="OsLaMu_03g0011710"/>
</dbReference>
<dbReference type="EnsemblPlants" id="OsLima_03g0011750.01">
    <property type="protein sequence ID" value="OsLima_03g0011750.01"/>
    <property type="gene ID" value="OsLima_03g0011750"/>
</dbReference>
<dbReference type="EnsemblPlants" id="OsLima_03g0011750.02">
    <property type="protein sequence ID" value="OsLima_03g0011750.02"/>
    <property type="gene ID" value="OsLima_03g0011750"/>
</dbReference>
<dbReference type="EnsemblPlants" id="OsLima_03g0011750.03">
    <property type="protein sequence ID" value="OsLima_03g0011750.03"/>
    <property type="gene ID" value="OsLima_03g0011750"/>
</dbReference>
<dbReference type="EnsemblPlants" id="OsLima_03g0011750.04">
    <property type="protein sequence ID" value="OsLima_03g0011750.04"/>
    <property type="gene ID" value="OsLima_03g0011750"/>
</dbReference>
<dbReference type="EnsemblPlants" id="OsLima_03g0011750.05">
    <property type="protein sequence ID" value="OsLima_03g0011750.05"/>
    <property type="gene ID" value="OsLima_03g0011750"/>
</dbReference>
<dbReference type="EnsemblPlants" id="OsLiXu_03g0011770.01">
    <property type="protein sequence ID" value="OsLiXu_03g0011770.01"/>
    <property type="gene ID" value="OsLiXu_03g0011770"/>
</dbReference>
<dbReference type="EnsemblPlants" id="OsLiXu_03g0011770.02">
    <property type="protein sequence ID" value="OsLiXu_03g0011770.02"/>
    <property type="gene ID" value="OsLiXu_03g0011770"/>
</dbReference>
<dbReference type="EnsemblPlants" id="OsLiXu_03g0011770.03">
    <property type="protein sequence ID" value="OsLiXu_03g0011770.03"/>
    <property type="gene ID" value="OsLiXu_03g0011770"/>
</dbReference>
<dbReference type="EnsemblPlants" id="OsLiXu_03g0011770.04">
    <property type="protein sequence ID" value="OsLiXu_03g0011770.04"/>
    <property type="gene ID" value="OsLiXu_03g0011770"/>
</dbReference>
<dbReference type="EnsemblPlants" id="OsMH63_03G011710_01">
    <property type="protein sequence ID" value="OsMH63_03G011710_01"/>
    <property type="gene ID" value="OsMH63_03G011710"/>
</dbReference>
<dbReference type="EnsemblPlants" id="OsMH63_03G011710_02">
    <property type="protein sequence ID" value="OsMH63_03G011710_02"/>
    <property type="gene ID" value="OsMH63_03G011710"/>
</dbReference>
<dbReference type="EnsemblPlants" id="OsMH63_03G011710_03">
    <property type="protein sequence ID" value="OsMH63_03G011710_03"/>
    <property type="gene ID" value="OsMH63_03G011710"/>
</dbReference>
<dbReference type="EnsemblPlants" id="OsMH63_03G011710_04">
    <property type="protein sequence ID" value="OsMH63_03G011710_04"/>
    <property type="gene ID" value="OsMH63_03G011710"/>
</dbReference>
<dbReference type="EnsemblPlants" id="OsPr106_03g0011710.01">
    <property type="protein sequence ID" value="OsPr106_03g0011710.01"/>
    <property type="gene ID" value="OsPr106_03g0011710"/>
</dbReference>
<dbReference type="EnsemblPlants" id="OsPr106_03g0011710.02">
    <property type="protein sequence ID" value="OsPr106_03g0011710.02"/>
    <property type="gene ID" value="OsPr106_03g0011710"/>
</dbReference>
<dbReference type="EnsemblPlants" id="OsPr106_03g0011710.03">
    <property type="protein sequence ID" value="OsPr106_03g0011710.03"/>
    <property type="gene ID" value="OsPr106_03g0011710"/>
</dbReference>
<dbReference type="EnsemblPlants" id="OsPr106_03g0011710.04">
    <property type="protein sequence ID" value="OsPr106_03g0011710.04"/>
    <property type="gene ID" value="OsPr106_03g0011710"/>
</dbReference>
<dbReference type="EnsemblPlants" id="OsPr106_03g0011710.05">
    <property type="protein sequence ID" value="OsPr106_03g0011710.05"/>
    <property type="gene ID" value="OsPr106_03g0011710"/>
</dbReference>
<dbReference type="EnsemblPlants" id="OsZS97_03G011700_01">
    <property type="protein sequence ID" value="OsZS97_03G011700_01"/>
    <property type="gene ID" value="OsZS97_03G011700"/>
</dbReference>
<dbReference type="EnsemblPlants" id="OsZS97_03G011700_02">
    <property type="protein sequence ID" value="OsZS97_03G011700_02"/>
    <property type="gene ID" value="OsZS97_03G011700"/>
</dbReference>
<dbReference type="EnsemblPlants" id="OsZS97_03G011700_03">
    <property type="protein sequence ID" value="OsZS97_03G011700_03"/>
    <property type="gene ID" value="OsZS97_03G011700"/>
</dbReference>
<dbReference type="EnsemblPlants" id="OsZS97_03G011700_04">
    <property type="protein sequence ID" value="OsZS97_03G011700_04"/>
    <property type="gene ID" value="OsZS97_03G011700"/>
</dbReference>
<dbReference type="Gramene" id="BGIOSGA012284-TA">
    <property type="protein sequence ID" value="BGIOSGA012284-PA"/>
    <property type="gene ID" value="BGIOSGA012284"/>
</dbReference>
<dbReference type="Gramene" id="OsIR64_03g0011600.01">
    <property type="protein sequence ID" value="OsIR64_03g0011600.01"/>
    <property type="gene ID" value="OsIR64_03g0011600"/>
</dbReference>
<dbReference type="Gramene" id="OsIR64_03g0011600.02">
    <property type="protein sequence ID" value="OsIR64_03g0011600.02"/>
    <property type="gene ID" value="OsIR64_03g0011600"/>
</dbReference>
<dbReference type="Gramene" id="OsIR64_03g0011600.03">
    <property type="protein sequence ID" value="OsIR64_03g0011600.03"/>
    <property type="gene ID" value="OsIR64_03g0011600"/>
</dbReference>
<dbReference type="Gramene" id="OsIR64_03g0011600.04">
    <property type="protein sequence ID" value="OsIR64_03g0011600.04"/>
    <property type="gene ID" value="OsIR64_03g0011600"/>
</dbReference>
<dbReference type="Gramene" id="OsIR64_03g0011600.05">
    <property type="protein sequence ID" value="OsIR64_03g0011600.05"/>
    <property type="gene ID" value="OsIR64_03g0011600"/>
</dbReference>
<dbReference type="Gramene" id="OsKYG_03g0011830.01">
    <property type="protein sequence ID" value="OsKYG_03g0011830.01"/>
    <property type="gene ID" value="OsKYG_03g0011830"/>
</dbReference>
<dbReference type="Gramene" id="OsKYG_03g0011830.02">
    <property type="protein sequence ID" value="OsKYG_03g0011830.02"/>
    <property type="gene ID" value="OsKYG_03g0011830"/>
</dbReference>
<dbReference type="Gramene" id="OsKYG_03g0011830.03">
    <property type="protein sequence ID" value="OsKYG_03g0011830.03"/>
    <property type="gene ID" value="OsKYG_03g0011830"/>
</dbReference>
<dbReference type="Gramene" id="OsKYG_03g0011830.04">
    <property type="protein sequence ID" value="OsKYG_03g0011830.04"/>
    <property type="gene ID" value="OsKYG_03g0011830"/>
</dbReference>
<dbReference type="Gramene" id="OsLaMu_03g0011710.01">
    <property type="protein sequence ID" value="OsLaMu_03g0011710.01"/>
    <property type="gene ID" value="OsLaMu_03g0011710"/>
</dbReference>
<dbReference type="Gramene" id="OsLaMu_03g0011710.02">
    <property type="protein sequence ID" value="OsLaMu_03g0011710.02"/>
    <property type="gene ID" value="OsLaMu_03g0011710"/>
</dbReference>
<dbReference type="Gramene" id="OsLaMu_03g0011710.03">
    <property type="protein sequence ID" value="OsLaMu_03g0011710.03"/>
    <property type="gene ID" value="OsLaMu_03g0011710"/>
</dbReference>
<dbReference type="Gramene" id="OsLaMu_03g0011710.04">
    <property type="protein sequence ID" value="OsLaMu_03g0011710.04"/>
    <property type="gene ID" value="OsLaMu_03g0011710"/>
</dbReference>
<dbReference type="Gramene" id="OsLima_03g0011750.01">
    <property type="protein sequence ID" value="OsLima_03g0011750.01"/>
    <property type="gene ID" value="OsLima_03g0011750"/>
</dbReference>
<dbReference type="Gramene" id="OsLima_03g0011750.02">
    <property type="protein sequence ID" value="OsLima_03g0011750.02"/>
    <property type="gene ID" value="OsLima_03g0011750"/>
</dbReference>
<dbReference type="Gramene" id="OsLima_03g0011750.03">
    <property type="protein sequence ID" value="OsLima_03g0011750.03"/>
    <property type="gene ID" value="OsLima_03g0011750"/>
</dbReference>
<dbReference type="Gramene" id="OsLima_03g0011750.04">
    <property type="protein sequence ID" value="OsLima_03g0011750.04"/>
    <property type="gene ID" value="OsLima_03g0011750"/>
</dbReference>
<dbReference type="Gramene" id="OsLima_03g0011750.05">
    <property type="protein sequence ID" value="OsLima_03g0011750.05"/>
    <property type="gene ID" value="OsLima_03g0011750"/>
</dbReference>
<dbReference type="Gramene" id="OsLiXu_03g0011770.01">
    <property type="protein sequence ID" value="OsLiXu_03g0011770.01"/>
    <property type="gene ID" value="OsLiXu_03g0011770"/>
</dbReference>
<dbReference type="Gramene" id="OsLiXu_03g0011770.02">
    <property type="protein sequence ID" value="OsLiXu_03g0011770.02"/>
    <property type="gene ID" value="OsLiXu_03g0011770"/>
</dbReference>
<dbReference type="Gramene" id="OsLiXu_03g0011770.03">
    <property type="protein sequence ID" value="OsLiXu_03g0011770.03"/>
    <property type="gene ID" value="OsLiXu_03g0011770"/>
</dbReference>
<dbReference type="Gramene" id="OsLiXu_03g0011770.04">
    <property type="protein sequence ID" value="OsLiXu_03g0011770.04"/>
    <property type="gene ID" value="OsLiXu_03g0011770"/>
</dbReference>
<dbReference type="Gramene" id="OsMH63_03G011710_01">
    <property type="protein sequence ID" value="OsMH63_03G011710_01"/>
    <property type="gene ID" value="OsMH63_03G011710"/>
</dbReference>
<dbReference type="Gramene" id="OsMH63_03G011710_02">
    <property type="protein sequence ID" value="OsMH63_03G011710_02"/>
    <property type="gene ID" value="OsMH63_03G011710"/>
</dbReference>
<dbReference type="Gramene" id="OsMH63_03G011710_03">
    <property type="protein sequence ID" value="OsMH63_03G011710_03"/>
    <property type="gene ID" value="OsMH63_03G011710"/>
</dbReference>
<dbReference type="Gramene" id="OsMH63_03G011710_04">
    <property type="protein sequence ID" value="OsMH63_03G011710_04"/>
    <property type="gene ID" value="OsMH63_03G011710"/>
</dbReference>
<dbReference type="Gramene" id="OsPr106_03g0011710.01">
    <property type="protein sequence ID" value="OsPr106_03g0011710.01"/>
    <property type="gene ID" value="OsPr106_03g0011710"/>
</dbReference>
<dbReference type="Gramene" id="OsPr106_03g0011710.02">
    <property type="protein sequence ID" value="OsPr106_03g0011710.02"/>
    <property type="gene ID" value="OsPr106_03g0011710"/>
</dbReference>
<dbReference type="Gramene" id="OsPr106_03g0011710.03">
    <property type="protein sequence ID" value="OsPr106_03g0011710.03"/>
    <property type="gene ID" value="OsPr106_03g0011710"/>
</dbReference>
<dbReference type="Gramene" id="OsPr106_03g0011710.04">
    <property type="protein sequence ID" value="OsPr106_03g0011710.04"/>
    <property type="gene ID" value="OsPr106_03g0011710"/>
</dbReference>
<dbReference type="Gramene" id="OsPr106_03g0011710.05">
    <property type="protein sequence ID" value="OsPr106_03g0011710.05"/>
    <property type="gene ID" value="OsPr106_03g0011710"/>
</dbReference>
<dbReference type="Gramene" id="OsZS97_03G011700_01">
    <property type="protein sequence ID" value="OsZS97_03G011700_01"/>
    <property type="gene ID" value="OsZS97_03G011700"/>
</dbReference>
<dbReference type="Gramene" id="OsZS97_03G011700_02">
    <property type="protein sequence ID" value="OsZS97_03G011700_02"/>
    <property type="gene ID" value="OsZS97_03G011700"/>
</dbReference>
<dbReference type="Gramene" id="OsZS97_03G011700_03">
    <property type="protein sequence ID" value="OsZS97_03G011700_03"/>
    <property type="gene ID" value="OsZS97_03G011700"/>
</dbReference>
<dbReference type="Gramene" id="OsZS97_03G011700_04">
    <property type="protein sequence ID" value="OsZS97_03G011700_04"/>
    <property type="gene ID" value="OsZS97_03G011700"/>
</dbReference>
<dbReference type="HOGENOM" id="CLU_022456_1_0_1"/>
<dbReference type="OMA" id="WIDQISH"/>
<dbReference type="Proteomes" id="UP000007015">
    <property type="component" value="Chromosome 3"/>
</dbReference>
<dbReference type="CDD" id="cd22159">
    <property type="entry name" value="F-box_AtTIR1-like"/>
    <property type="match status" value="1"/>
</dbReference>
<dbReference type="FunFam" id="3.80.10.10:FF:000124">
    <property type="entry name" value="Coronatine-insensitive protein 1"/>
    <property type="match status" value="1"/>
</dbReference>
<dbReference type="FunFam" id="1.20.1280.50:FF:000034">
    <property type="entry name" value="Coronatine-insensitive protein homolog 2"/>
    <property type="match status" value="1"/>
</dbReference>
<dbReference type="Gene3D" id="1.20.1280.50">
    <property type="match status" value="1"/>
</dbReference>
<dbReference type="Gene3D" id="3.80.10.10">
    <property type="entry name" value="Ribonuclease Inhibitor"/>
    <property type="match status" value="1"/>
</dbReference>
<dbReference type="InterPro" id="IPR041567">
    <property type="entry name" value="COI1_F-box"/>
</dbReference>
<dbReference type="InterPro" id="IPR032675">
    <property type="entry name" value="LRR_dom_sf"/>
</dbReference>
<dbReference type="InterPro" id="IPR041101">
    <property type="entry name" value="Transp_inhibit"/>
</dbReference>
<dbReference type="PANTHER" id="PTHR16134:SF119">
    <property type="entry name" value="AT02038P-RELATED"/>
    <property type="match status" value="1"/>
</dbReference>
<dbReference type="PANTHER" id="PTHR16134">
    <property type="entry name" value="F-BOX/TPR REPEAT PROTEIN POF3"/>
    <property type="match status" value="1"/>
</dbReference>
<dbReference type="Pfam" id="PF18511">
    <property type="entry name" value="F-box_5"/>
    <property type="match status" value="1"/>
</dbReference>
<dbReference type="Pfam" id="PF18791">
    <property type="entry name" value="Transp_inhibit"/>
    <property type="match status" value="1"/>
</dbReference>
<dbReference type="SUPFAM" id="SSF52047">
    <property type="entry name" value="RNI-like"/>
    <property type="match status" value="2"/>
</dbReference>
<protein>
    <recommendedName>
        <fullName evidence="5">Coronatine-insensitive protein homolog 2</fullName>
    </recommendedName>
</protein>